<gene>
    <name type="primary">xlnD</name>
    <name type="synonym">xylA</name>
    <name type="ORF">An01g09960</name>
</gene>
<feature type="signal peptide" evidence="2">
    <location>
        <begin position="1"/>
        <end position="26"/>
    </location>
</feature>
<feature type="chain" id="PRO_5000219423" description="Probable exo-1,4-beta-xylosidase xlnD">
    <location>
        <begin position="27"/>
        <end position="804"/>
    </location>
</feature>
<feature type="active site" evidence="1">
    <location>
        <position position="315"/>
    </location>
</feature>
<feature type="glycosylation site" description="N-linked (GlcNAc...) asparagine" evidence="2">
    <location>
        <position position="29"/>
    </location>
</feature>
<feature type="glycosylation site" description="N-linked (GlcNAc...) asparagine" evidence="2">
    <location>
        <position position="124"/>
    </location>
</feature>
<feature type="glycosylation site" description="N-linked (GlcNAc...) asparagine" evidence="2">
    <location>
        <position position="148"/>
    </location>
</feature>
<feature type="glycosylation site" description="N-linked (GlcNAc...) asparagine" evidence="2">
    <location>
        <position position="242"/>
    </location>
</feature>
<feature type="glycosylation site" description="N-linked (GlcNAc...) asparagine" evidence="2">
    <location>
        <position position="251"/>
    </location>
</feature>
<feature type="glycosylation site" description="N-linked (GlcNAc...) asparagine" evidence="2">
    <location>
        <position position="357"/>
    </location>
</feature>
<feature type="glycosylation site" description="N-linked (GlcNAc...) asparagine" evidence="2">
    <location>
        <position position="390"/>
    </location>
</feature>
<feature type="glycosylation site" description="N-linked (GlcNAc...) asparagine" evidence="2">
    <location>
        <position position="413"/>
    </location>
</feature>
<feature type="glycosylation site" description="N-linked (GlcNAc...) asparagine" evidence="2">
    <location>
        <position position="444"/>
    </location>
</feature>
<feature type="glycosylation site" description="N-linked (GlcNAc...) asparagine" evidence="2">
    <location>
        <position position="455"/>
    </location>
</feature>
<feature type="glycosylation site" description="N-linked (GlcNAc...) asparagine" evidence="2">
    <location>
        <position position="573"/>
    </location>
</feature>
<feature type="glycosylation site" description="N-linked (GlcNAc...) asparagine" evidence="2">
    <location>
        <position position="576"/>
    </location>
</feature>
<feature type="glycosylation site" description="N-linked (GlcNAc...) asparagine" evidence="2">
    <location>
        <position position="665"/>
    </location>
</feature>
<feature type="glycosylation site" description="N-linked (GlcNAc...) asparagine" evidence="2">
    <location>
        <position position="696"/>
    </location>
</feature>
<feature type="glycosylation site" description="N-linked (GlcNAc...) asparagine" evidence="2">
    <location>
        <position position="718"/>
    </location>
</feature>
<reference key="1">
    <citation type="journal article" date="2007" name="Nat. Biotechnol.">
        <title>Genome sequencing and analysis of the versatile cell factory Aspergillus niger CBS 513.88.</title>
        <authorList>
            <person name="Pel H.J."/>
            <person name="de Winde J.H."/>
            <person name="Archer D.B."/>
            <person name="Dyer P.S."/>
            <person name="Hofmann G."/>
            <person name="Schaap P.J."/>
            <person name="Turner G."/>
            <person name="de Vries R.P."/>
            <person name="Albang R."/>
            <person name="Albermann K."/>
            <person name="Andersen M.R."/>
            <person name="Bendtsen J.D."/>
            <person name="Benen J.A.E."/>
            <person name="van den Berg M."/>
            <person name="Breestraat S."/>
            <person name="Caddick M.X."/>
            <person name="Contreras R."/>
            <person name="Cornell M."/>
            <person name="Coutinho P.M."/>
            <person name="Danchin E.G.J."/>
            <person name="Debets A.J.M."/>
            <person name="Dekker P."/>
            <person name="van Dijck P.W.M."/>
            <person name="van Dijk A."/>
            <person name="Dijkhuizen L."/>
            <person name="Driessen A.J.M."/>
            <person name="d'Enfert C."/>
            <person name="Geysens S."/>
            <person name="Goosen C."/>
            <person name="Groot G.S.P."/>
            <person name="de Groot P.W.J."/>
            <person name="Guillemette T."/>
            <person name="Henrissat B."/>
            <person name="Herweijer M."/>
            <person name="van den Hombergh J.P.T.W."/>
            <person name="van den Hondel C.A.M.J.J."/>
            <person name="van der Heijden R.T.J.M."/>
            <person name="van der Kaaij R.M."/>
            <person name="Klis F.M."/>
            <person name="Kools H.J."/>
            <person name="Kubicek C.P."/>
            <person name="van Kuyk P.A."/>
            <person name="Lauber J."/>
            <person name="Lu X."/>
            <person name="van der Maarel M.J.E.C."/>
            <person name="Meulenberg R."/>
            <person name="Menke H."/>
            <person name="Mortimer M.A."/>
            <person name="Nielsen J."/>
            <person name="Oliver S.G."/>
            <person name="Olsthoorn M."/>
            <person name="Pal K."/>
            <person name="van Peij N.N.M.E."/>
            <person name="Ram A.F.J."/>
            <person name="Rinas U."/>
            <person name="Roubos J.A."/>
            <person name="Sagt C.M.J."/>
            <person name="Schmoll M."/>
            <person name="Sun J."/>
            <person name="Ussery D."/>
            <person name="Varga J."/>
            <person name="Vervecken W."/>
            <person name="van de Vondervoort P.J.J."/>
            <person name="Wedler H."/>
            <person name="Woesten H.A.B."/>
            <person name="Zeng A.-P."/>
            <person name="van Ooyen A.J.J."/>
            <person name="Visser J."/>
            <person name="Stam H."/>
        </authorList>
    </citation>
    <scope>NUCLEOTIDE SEQUENCE [LARGE SCALE GENOMIC DNA]</scope>
    <source>
        <strain>ATCC MYA-4892 / CBS 513.88 / FGSC A1513</strain>
    </source>
</reference>
<accession>A2QA27</accession>
<evidence type="ECO:0000250" key="1"/>
<evidence type="ECO:0000255" key="2"/>
<evidence type="ECO:0000305" key="3"/>
<protein>
    <recommendedName>
        <fullName>Probable exo-1,4-beta-xylosidase xlnD</fullName>
        <ecNumber>3.2.1.37</ecNumber>
    </recommendedName>
    <alternativeName>
        <fullName>1,4-beta-D-xylan xylohydrolase xlnD</fullName>
    </alternativeName>
    <alternativeName>
        <fullName>Beta-xylosidase A</fullName>
    </alternativeName>
    <alternativeName>
        <fullName>Beta-xylosidase xlnD</fullName>
    </alternativeName>
    <alternativeName>
        <fullName>Xylobiase xlnD</fullName>
    </alternativeName>
</protein>
<keyword id="KW-0119">Carbohydrate metabolism</keyword>
<keyword id="KW-0325">Glycoprotein</keyword>
<keyword id="KW-0326">Glycosidase</keyword>
<keyword id="KW-0378">Hydrolase</keyword>
<keyword id="KW-0624">Polysaccharide degradation</keyword>
<keyword id="KW-1185">Reference proteome</keyword>
<keyword id="KW-0964">Secreted</keyword>
<keyword id="KW-0732">Signal</keyword>
<keyword id="KW-0858">Xylan degradation</keyword>
<name>XYND_ASPNC</name>
<dbReference type="EC" id="3.2.1.37"/>
<dbReference type="EMBL" id="AM269980">
    <property type="protein sequence ID" value="CAK37179.1"/>
    <property type="molecule type" value="Genomic_DNA"/>
</dbReference>
<dbReference type="RefSeq" id="XP_001389416.1">
    <property type="nucleotide sequence ID" value="XM_001389379.2"/>
</dbReference>
<dbReference type="SMR" id="A2QA27"/>
<dbReference type="Allergome" id="82">
    <property type="allergen name" value="Asp n 14"/>
</dbReference>
<dbReference type="CAZy" id="GH3">
    <property type="family name" value="Glycoside Hydrolase Family 3"/>
</dbReference>
<dbReference type="GlyCosmos" id="A2QA27">
    <property type="glycosylation" value="15 sites, No reported glycans"/>
</dbReference>
<dbReference type="EnsemblFungi" id="CAK37179">
    <property type="protein sequence ID" value="CAK37179"/>
    <property type="gene ID" value="An01g09960"/>
</dbReference>
<dbReference type="GeneID" id="4977682"/>
<dbReference type="KEGG" id="ang:An01g09960"/>
<dbReference type="VEuPathDB" id="FungiDB:An01g09960"/>
<dbReference type="HOGENOM" id="CLU_004542_5_3_1"/>
<dbReference type="UniPathway" id="UPA00114"/>
<dbReference type="Proteomes" id="UP000006706">
    <property type="component" value="Chromosome 2R"/>
</dbReference>
<dbReference type="GO" id="GO:0005576">
    <property type="term" value="C:extracellular region"/>
    <property type="evidence" value="ECO:0007669"/>
    <property type="project" value="UniProtKB-SubCell"/>
</dbReference>
<dbReference type="GO" id="GO:0046556">
    <property type="term" value="F:alpha-L-arabinofuranosidase activity"/>
    <property type="evidence" value="ECO:0007669"/>
    <property type="project" value="TreeGrafter"/>
</dbReference>
<dbReference type="GO" id="GO:0009044">
    <property type="term" value="F:xylan 1,4-beta-xylosidase activity"/>
    <property type="evidence" value="ECO:0000314"/>
    <property type="project" value="AspGD"/>
</dbReference>
<dbReference type="GO" id="GO:0031222">
    <property type="term" value="P:arabinan catabolic process"/>
    <property type="evidence" value="ECO:0007669"/>
    <property type="project" value="TreeGrafter"/>
</dbReference>
<dbReference type="GO" id="GO:0045493">
    <property type="term" value="P:xylan catabolic process"/>
    <property type="evidence" value="ECO:0000314"/>
    <property type="project" value="AspGD"/>
</dbReference>
<dbReference type="FunFam" id="2.60.40.10:FF:001420">
    <property type="entry name" value="Exo-1,4-beta-xylosidase xlnD"/>
    <property type="match status" value="1"/>
</dbReference>
<dbReference type="FunFam" id="3.20.20.300:FF:000009">
    <property type="entry name" value="Exo-1,4-beta-xylosidase xlnD"/>
    <property type="match status" value="1"/>
</dbReference>
<dbReference type="FunFam" id="3.40.50.1700:FF:000007">
    <property type="entry name" value="Exo-1,4-beta-xylosidase xlnD"/>
    <property type="match status" value="1"/>
</dbReference>
<dbReference type="Gene3D" id="3.40.50.1700">
    <property type="entry name" value="Glycoside hydrolase family 3 C-terminal domain"/>
    <property type="match status" value="1"/>
</dbReference>
<dbReference type="Gene3D" id="3.20.20.300">
    <property type="entry name" value="Glycoside hydrolase, family 3, N-terminal domain"/>
    <property type="match status" value="1"/>
</dbReference>
<dbReference type="Gene3D" id="2.60.40.10">
    <property type="entry name" value="Immunoglobulins"/>
    <property type="match status" value="1"/>
</dbReference>
<dbReference type="InterPro" id="IPR044993">
    <property type="entry name" value="BXL"/>
</dbReference>
<dbReference type="InterPro" id="IPR026891">
    <property type="entry name" value="Fn3-like"/>
</dbReference>
<dbReference type="InterPro" id="IPR002772">
    <property type="entry name" value="Glyco_hydro_3_C"/>
</dbReference>
<dbReference type="InterPro" id="IPR036881">
    <property type="entry name" value="Glyco_hydro_3_C_sf"/>
</dbReference>
<dbReference type="InterPro" id="IPR001764">
    <property type="entry name" value="Glyco_hydro_3_N"/>
</dbReference>
<dbReference type="InterPro" id="IPR036962">
    <property type="entry name" value="Glyco_hydro_3_N_sf"/>
</dbReference>
<dbReference type="InterPro" id="IPR017853">
    <property type="entry name" value="Glycoside_hydrolase_SF"/>
</dbReference>
<dbReference type="InterPro" id="IPR013783">
    <property type="entry name" value="Ig-like_fold"/>
</dbReference>
<dbReference type="PANTHER" id="PTHR42721:SF13">
    <property type="entry name" value="EXO-1,4-BETA-XYLOSIDASE XLND"/>
    <property type="match status" value="1"/>
</dbReference>
<dbReference type="PANTHER" id="PTHR42721">
    <property type="entry name" value="SUGAR HYDROLASE-RELATED"/>
    <property type="match status" value="1"/>
</dbReference>
<dbReference type="Pfam" id="PF14310">
    <property type="entry name" value="Fn3-like"/>
    <property type="match status" value="1"/>
</dbReference>
<dbReference type="Pfam" id="PF00933">
    <property type="entry name" value="Glyco_hydro_3"/>
    <property type="match status" value="1"/>
</dbReference>
<dbReference type="Pfam" id="PF01915">
    <property type="entry name" value="Glyco_hydro_3_C"/>
    <property type="match status" value="1"/>
</dbReference>
<dbReference type="SMART" id="SM01217">
    <property type="entry name" value="Fn3_like"/>
    <property type="match status" value="1"/>
</dbReference>
<dbReference type="SUPFAM" id="SSF51445">
    <property type="entry name" value="(Trans)glycosidases"/>
    <property type="match status" value="1"/>
</dbReference>
<dbReference type="SUPFAM" id="SSF52279">
    <property type="entry name" value="Beta-D-glucan exohydrolase, C-terminal domain"/>
    <property type="match status" value="1"/>
</dbReference>
<sequence length="804" mass="87211">MAHSMSRPVAATAAALLALALPQALAQANTSYVDYNIEANPDLYPLCIETIPLSFPDCQNGPLRSHLICDETATPYDRAASLISLFTLDELIANTGNTGLGVSRLGLPAYQVWSEALHGLDRANFSDSGAYNWATSFPQPILTTAALNRTLIHQIASIISTQGRAFNNAGRYGLDVYAPNINTFRHPVWGRGQETPGEDVSLAAVYAYEYITGIQGPDPESNLKLAATAKHYAGYDIENWHNHSRLGNDMNITQQDLSEYYTPQFHVAARDAKVQSVMCAYNAVNGVPACADSYFLQTLLRDTFGFVDHGYVSSDCDAAYNIYNPHGYASSQAAAAAEAILAGTDIDCGTTYQWHLNESIAAGDLSRDDIEQGVIRLYTTLVQAGYFDSNTTKANNPYRDLSWSDVLETDAWNISYQAATQGIVLLKNSNNVLPLTEKAYPPSNTTVALIGPWANATTQLLGNYYGNAPYMISPRAAFEEAGYKVNFAEGTGISSTSTSGFAAALSAAQSADVIIYAGGIDNTLEAEALDRESIAWPGNQLDLIQKLASAAGKKPLIVLQMGGGQVDSSSLKNNTNVSALLWGGYPGQSGGFALRDIITGKKNPAGRLVTTQYPASYAEEFPATDMNLRPEGDNPGQTYKWYTGEAVYEFGHGLFYTTFAESSSNTTTKEVKLNIQDILSQTHEDLASITQLPVLNFTANIRNTGKLESDYTAMVFANTSDAGPAPYPKKWLVGWDRLGEVKVGETRELRVPVEVGSFARVNEDGDWVVFPGTFELALNLERKVRVKVVLEGEEEVVLKWPGKE</sequence>
<organism>
    <name type="scientific">Aspergillus niger (strain ATCC MYA-4892 / CBS 513.88 / FGSC A1513)</name>
    <dbReference type="NCBI Taxonomy" id="425011"/>
    <lineage>
        <taxon>Eukaryota</taxon>
        <taxon>Fungi</taxon>
        <taxon>Dikarya</taxon>
        <taxon>Ascomycota</taxon>
        <taxon>Pezizomycotina</taxon>
        <taxon>Eurotiomycetes</taxon>
        <taxon>Eurotiomycetidae</taxon>
        <taxon>Eurotiales</taxon>
        <taxon>Aspergillaceae</taxon>
        <taxon>Aspergillus</taxon>
        <taxon>Aspergillus subgen. Circumdati</taxon>
    </lineage>
</organism>
<proteinExistence type="inferred from homology"/>
<comment type="function">
    <text evidence="1">Xylan 1,4-beta-xylosidase involved in the hydrolysis of xylan, a major structural heterogeneous polysaccharide found in plant biomass representing the second most abundant polysaccharide in the biosphere, after cellulose.</text>
</comment>
<comment type="catalytic activity">
    <reaction>
        <text>Hydrolysis of (1-&gt;4)-beta-D-xylans, to remove successive D-xylose residues from the non-reducing termini.</text>
        <dbReference type="EC" id="3.2.1.37"/>
    </reaction>
</comment>
<comment type="pathway">
    <text>Glycan degradation; xylan degradation.</text>
</comment>
<comment type="subcellular location">
    <subcellularLocation>
        <location evidence="1">Secreted</location>
    </subcellularLocation>
</comment>
<comment type="similarity">
    <text evidence="3">Belongs to the glycosyl hydrolase 3 family.</text>
</comment>